<gene>
    <name evidence="1" type="primary">nagZ</name>
    <name type="ordered locus">IL0915</name>
</gene>
<dbReference type="EC" id="3.2.1.52" evidence="1"/>
<dbReference type="EMBL" id="AE017340">
    <property type="protein sequence ID" value="AAV81755.1"/>
    <property type="molecule type" value="Genomic_DNA"/>
</dbReference>
<dbReference type="RefSeq" id="WP_011234166.1">
    <property type="nucleotide sequence ID" value="NC_006512.1"/>
</dbReference>
<dbReference type="SMR" id="Q5QUZ5"/>
<dbReference type="STRING" id="283942.IL0915"/>
<dbReference type="CAZy" id="GH3">
    <property type="family name" value="Glycoside Hydrolase Family 3"/>
</dbReference>
<dbReference type="GeneID" id="41336070"/>
<dbReference type="KEGG" id="ilo:IL0915"/>
<dbReference type="eggNOG" id="COG1472">
    <property type="taxonomic scope" value="Bacteria"/>
</dbReference>
<dbReference type="HOGENOM" id="CLU_008392_0_0_6"/>
<dbReference type="OrthoDB" id="9786661at2"/>
<dbReference type="UniPathway" id="UPA00544"/>
<dbReference type="Proteomes" id="UP000001171">
    <property type="component" value="Chromosome"/>
</dbReference>
<dbReference type="GO" id="GO:0005737">
    <property type="term" value="C:cytoplasm"/>
    <property type="evidence" value="ECO:0007669"/>
    <property type="project" value="UniProtKB-SubCell"/>
</dbReference>
<dbReference type="GO" id="GO:0004563">
    <property type="term" value="F:beta-N-acetylhexosaminidase activity"/>
    <property type="evidence" value="ECO:0007669"/>
    <property type="project" value="UniProtKB-UniRule"/>
</dbReference>
<dbReference type="GO" id="GO:0005975">
    <property type="term" value="P:carbohydrate metabolic process"/>
    <property type="evidence" value="ECO:0007669"/>
    <property type="project" value="InterPro"/>
</dbReference>
<dbReference type="GO" id="GO:0051301">
    <property type="term" value="P:cell division"/>
    <property type="evidence" value="ECO:0007669"/>
    <property type="project" value="UniProtKB-KW"/>
</dbReference>
<dbReference type="GO" id="GO:0071555">
    <property type="term" value="P:cell wall organization"/>
    <property type="evidence" value="ECO:0007669"/>
    <property type="project" value="UniProtKB-KW"/>
</dbReference>
<dbReference type="GO" id="GO:0009252">
    <property type="term" value="P:peptidoglycan biosynthetic process"/>
    <property type="evidence" value="ECO:0007669"/>
    <property type="project" value="UniProtKB-KW"/>
</dbReference>
<dbReference type="GO" id="GO:0009254">
    <property type="term" value="P:peptidoglycan turnover"/>
    <property type="evidence" value="ECO:0007669"/>
    <property type="project" value="UniProtKB-UniRule"/>
</dbReference>
<dbReference type="GO" id="GO:0008360">
    <property type="term" value="P:regulation of cell shape"/>
    <property type="evidence" value="ECO:0007669"/>
    <property type="project" value="UniProtKB-KW"/>
</dbReference>
<dbReference type="FunFam" id="3.20.20.300:FF:000001">
    <property type="entry name" value="Beta-hexosaminidase"/>
    <property type="match status" value="1"/>
</dbReference>
<dbReference type="Gene3D" id="3.20.20.300">
    <property type="entry name" value="Glycoside hydrolase, family 3, N-terminal domain"/>
    <property type="match status" value="1"/>
</dbReference>
<dbReference type="HAMAP" id="MF_00364">
    <property type="entry name" value="NagZ"/>
    <property type="match status" value="1"/>
</dbReference>
<dbReference type="InterPro" id="IPR022956">
    <property type="entry name" value="Beta_hexosaminidase_bac"/>
</dbReference>
<dbReference type="InterPro" id="IPR019800">
    <property type="entry name" value="Glyco_hydro_3_AS"/>
</dbReference>
<dbReference type="InterPro" id="IPR001764">
    <property type="entry name" value="Glyco_hydro_3_N"/>
</dbReference>
<dbReference type="InterPro" id="IPR036962">
    <property type="entry name" value="Glyco_hydro_3_N_sf"/>
</dbReference>
<dbReference type="InterPro" id="IPR017853">
    <property type="entry name" value="Glycoside_hydrolase_SF"/>
</dbReference>
<dbReference type="InterPro" id="IPR050226">
    <property type="entry name" value="NagZ_Beta-hexosaminidase"/>
</dbReference>
<dbReference type="NCBIfam" id="NF003740">
    <property type="entry name" value="PRK05337.1"/>
    <property type="match status" value="1"/>
</dbReference>
<dbReference type="PANTHER" id="PTHR30480:SF13">
    <property type="entry name" value="BETA-HEXOSAMINIDASE"/>
    <property type="match status" value="1"/>
</dbReference>
<dbReference type="PANTHER" id="PTHR30480">
    <property type="entry name" value="BETA-HEXOSAMINIDASE-RELATED"/>
    <property type="match status" value="1"/>
</dbReference>
<dbReference type="Pfam" id="PF00933">
    <property type="entry name" value="Glyco_hydro_3"/>
    <property type="match status" value="1"/>
</dbReference>
<dbReference type="SUPFAM" id="SSF51445">
    <property type="entry name" value="(Trans)glycosidases"/>
    <property type="match status" value="1"/>
</dbReference>
<dbReference type="PROSITE" id="PS00775">
    <property type="entry name" value="GLYCOSYL_HYDROL_F3"/>
    <property type="match status" value="1"/>
</dbReference>
<evidence type="ECO:0000255" key="1">
    <source>
        <dbReference type="HAMAP-Rule" id="MF_00364"/>
    </source>
</evidence>
<protein>
    <recommendedName>
        <fullName evidence="1">Beta-hexosaminidase</fullName>
        <ecNumber evidence="1">3.2.1.52</ecNumber>
    </recommendedName>
    <alternativeName>
        <fullName evidence="1">Beta-N-acetylhexosaminidase</fullName>
    </alternativeName>
    <alternativeName>
        <fullName evidence="1">N-acetyl-beta-glucosaminidase</fullName>
    </alternativeName>
</protein>
<name>NAGZ_IDILO</name>
<organism>
    <name type="scientific">Idiomarina loihiensis (strain ATCC BAA-735 / DSM 15497 / L2-TR)</name>
    <dbReference type="NCBI Taxonomy" id="283942"/>
    <lineage>
        <taxon>Bacteria</taxon>
        <taxon>Pseudomonadati</taxon>
        <taxon>Pseudomonadota</taxon>
        <taxon>Gammaproteobacteria</taxon>
        <taxon>Alteromonadales</taxon>
        <taxon>Idiomarinaceae</taxon>
        <taxon>Idiomarina</taxon>
    </lineage>
</organism>
<proteinExistence type="inferred from homology"/>
<feature type="chain" id="PRO_0000234914" description="Beta-hexosaminidase">
    <location>
        <begin position="1"/>
        <end position="330"/>
    </location>
</feature>
<feature type="active site" description="Proton donor/acceptor" evidence="1">
    <location>
        <position position="176"/>
    </location>
</feature>
<feature type="active site" description="Nucleophile" evidence="1">
    <location>
        <position position="246"/>
    </location>
</feature>
<feature type="binding site" evidence="1">
    <location>
        <position position="62"/>
    </location>
    <ligand>
        <name>substrate</name>
    </ligand>
</feature>
<feature type="binding site" evidence="1">
    <location>
        <position position="70"/>
    </location>
    <ligand>
        <name>substrate</name>
    </ligand>
</feature>
<feature type="binding site" evidence="1">
    <location>
        <position position="133"/>
    </location>
    <ligand>
        <name>substrate</name>
    </ligand>
</feature>
<feature type="binding site" evidence="1">
    <location>
        <begin position="163"/>
        <end position="164"/>
    </location>
    <ligand>
        <name>substrate</name>
    </ligand>
</feature>
<feature type="site" description="Important for catalytic activity" evidence="1">
    <location>
        <position position="174"/>
    </location>
</feature>
<sequence>MAQLMIDIAGTELTAEDKKLLAAPAVNGLILFTRNFASLEQLQELIREARAAAAKPLLIAVDHEGGRVQRFREGFSAIPSMGSLQKIENEDERQRAARDLGWLMAAEVQAVGIDISFAPVLDVDDCSDVIGDRAFSAVPSEISKLASSFIEGMHEAGMACTGKHFPGHGSVQADSHIAIPEDDRTLEQIRAHDLKPFLSLIQKLDGIMPAHVIYPQIDPQPAGFSEFWLQQILRSELQFNGTIFSDDLSMQGATVAGDMEQRAVAALKAGCDMILVCNDRAGAVQVLDADLPATEPESAQRVNRMLMSSNAVSLEELKRTQRWEQAQRWL</sequence>
<keyword id="KW-0131">Cell cycle</keyword>
<keyword id="KW-0132">Cell division</keyword>
<keyword id="KW-0133">Cell shape</keyword>
<keyword id="KW-0961">Cell wall biogenesis/degradation</keyword>
<keyword id="KW-0963">Cytoplasm</keyword>
<keyword id="KW-0326">Glycosidase</keyword>
<keyword id="KW-0378">Hydrolase</keyword>
<keyword id="KW-0573">Peptidoglycan synthesis</keyword>
<keyword id="KW-1185">Reference proteome</keyword>
<reference key="1">
    <citation type="journal article" date="2004" name="Proc. Natl. Acad. Sci. U.S.A.">
        <title>Genome sequence of the deep-sea gamma-proteobacterium Idiomarina loihiensis reveals amino acid fermentation as a source of carbon and energy.</title>
        <authorList>
            <person name="Hou S."/>
            <person name="Saw J.H."/>
            <person name="Lee K.S."/>
            <person name="Freitas T.A."/>
            <person name="Belisle C."/>
            <person name="Kawarabayasi Y."/>
            <person name="Donachie S.P."/>
            <person name="Pikina A."/>
            <person name="Galperin M.Y."/>
            <person name="Koonin E.V."/>
            <person name="Makarova K.S."/>
            <person name="Omelchenko M.V."/>
            <person name="Sorokin A."/>
            <person name="Wolf Y.I."/>
            <person name="Li Q.X."/>
            <person name="Keum Y.S."/>
            <person name="Campbell S."/>
            <person name="Denery J."/>
            <person name="Aizawa S."/>
            <person name="Shibata S."/>
            <person name="Malahoff A."/>
            <person name="Alam M."/>
        </authorList>
    </citation>
    <scope>NUCLEOTIDE SEQUENCE [LARGE SCALE GENOMIC DNA]</scope>
    <source>
        <strain>ATCC BAA-735 / DSM 15497 / L2-TR</strain>
    </source>
</reference>
<accession>Q5QUZ5</accession>
<comment type="function">
    <text evidence="1">Plays a role in peptidoglycan recycling by cleaving the terminal beta-1,4-linked N-acetylglucosamine (GlcNAc) from peptide-linked peptidoglycan fragments, giving rise to free GlcNAc, anhydro-N-acetylmuramic acid and anhydro-N-acetylmuramic acid-linked peptides.</text>
</comment>
<comment type="catalytic activity">
    <reaction evidence="1">
        <text>Hydrolysis of terminal non-reducing N-acetyl-D-hexosamine residues in N-acetyl-beta-D-hexosaminides.</text>
        <dbReference type="EC" id="3.2.1.52"/>
    </reaction>
</comment>
<comment type="pathway">
    <text evidence="1">Cell wall biogenesis; peptidoglycan recycling.</text>
</comment>
<comment type="subcellular location">
    <subcellularLocation>
        <location evidence="1">Cytoplasm</location>
    </subcellularLocation>
</comment>
<comment type="similarity">
    <text evidence="1">Belongs to the glycosyl hydrolase 3 family. NagZ subfamily.</text>
</comment>